<name>ARSA_BOVIN</name>
<sequence length="507" mass="53807">MEALWTLTLALAAGLAAASPPNILLIFADDLGYGDLGSYGHPSSTTPNLDQLAAGGLRFTDFYVPVSLCTPSRAALLTGRLPVRMGLYPGVLEPSSRGGLPLDEVTLAEVLAAQGYLTGIAGKWHLGVGPEGAFLPPHHGFHRFLGIPYSHDQGPCQNLTCFPPATPCEGICDQGLVPIPLLANLSVEAQPPWLPGLEARYVAFARDLMTDAQHQGRPFFLYYASHHTHYPQFSGQSFPGHSGRGPFGDSLMELDAAVGALMTAVGDLGLLGETLVFFTADNGPETMRMSHGGCSGLLRCGKGTTFEGGVREPALAFWPGHIAPGVTHELASSLDLLPTLAALAGAQLPNITLDGVDLSPLLLGTGKSPRHTLFFYSAYPDEVRGVFAVRSGKYKAHFFTQGSVHSDTTADPACHASNPLTAHEPPLLFDLSEDPGENYNLLDSVDEVAPEALQAVKQLELLKAQFDAAMTFGPSQMAQGEDPTLQVCCQPSCTPRPSCCHCPEFQP</sequence>
<reference key="1">
    <citation type="submission" date="2006-09" db="EMBL/GenBank/DDBJ databases">
        <authorList>
            <consortium name="NIH - Mammalian Gene Collection (MGC) project"/>
        </authorList>
    </citation>
    <scope>NUCLEOTIDE SEQUENCE [LARGE SCALE MRNA]</scope>
    <source>
        <strain>Hereford</strain>
        <tissue>Thalamus</tissue>
    </source>
</reference>
<organism>
    <name type="scientific">Bos taurus</name>
    <name type="common">Bovine</name>
    <dbReference type="NCBI Taxonomy" id="9913"/>
    <lineage>
        <taxon>Eukaryota</taxon>
        <taxon>Metazoa</taxon>
        <taxon>Chordata</taxon>
        <taxon>Craniata</taxon>
        <taxon>Vertebrata</taxon>
        <taxon>Euteleostomi</taxon>
        <taxon>Mammalia</taxon>
        <taxon>Eutheria</taxon>
        <taxon>Laurasiatheria</taxon>
        <taxon>Artiodactyla</taxon>
        <taxon>Ruminantia</taxon>
        <taxon>Pecora</taxon>
        <taxon>Bovidae</taxon>
        <taxon>Bovinae</taxon>
        <taxon>Bos</taxon>
    </lineage>
</organism>
<proteinExistence type="evidence at transcript level"/>
<keyword id="KW-0106">Calcium</keyword>
<keyword id="KW-1015">Disulfide bond</keyword>
<keyword id="KW-0256">Endoplasmic reticulum</keyword>
<keyword id="KW-0325">Glycoprotein</keyword>
<keyword id="KW-0378">Hydrolase</keyword>
<keyword id="KW-0443">Lipid metabolism</keyword>
<keyword id="KW-0458">Lysosome</keyword>
<keyword id="KW-0479">Metal-binding</keyword>
<keyword id="KW-1185">Reference proteome</keyword>
<keyword id="KW-0732">Signal</keyword>
<dbReference type="EC" id="3.1.6.8" evidence="1"/>
<dbReference type="EMBL" id="BC123816">
    <property type="protein sequence ID" value="AAI23817.1"/>
    <property type="molecule type" value="mRNA"/>
</dbReference>
<dbReference type="RefSeq" id="NP_001068673.1">
    <property type="nucleotide sequence ID" value="NM_001075205.1"/>
</dbReference>
<dbReference type="RefSeq" id="XP_005207557.1">
    <property type="nucleotide sequence ID" value="XM_005207500.5"/>
</dbReference>
<dbReference type="SMR" id="Q08DD1"/>
<dbReference type="FunCoup" id="Q08DD1">
    <property type="interactions" value="346"/>
</dbReference>
<dbReference type="STRING" id="9913.ENSBTAP00000021364"/>
<dbReference type="GlyCosmos" id="Q08DD1">
    <property type="glycosylation" value="3 sites, No reported glycans"/>
</dbReference>
<dbReference type="GlyGen" id="Q08DD1">
    <property type="glycosylation" value="3 sites"/>
</dbReference>
<dbReference type="PaxDb" id="9913-ENSBTAP00000021364"/>
<dbReference type="Ensembl" id="ENSBTAT00000021364.6">
    <property type="protein sequence ID" value="ENSBTAP00000021364.4"/>
    <property type="gene ID" value="ENSBTAG00000016053.6"/>
</dbReference>
<dbReference type="GeneID" id="505514"/>
<dbReference type="KEGG" id="bta:505514"/>
<dbReference type="CTD" id="410"/>
<dbReference type="VEuPathDB" id="HostDB:ENSBTAG00000016053"/>
<dbReference type="VGNC" id="VGNC:50217">
    <property type="gene designation" value="ARSA"/>
</dbReference>
<dbReference type="eggNOG" id="KOG3867">
    <property type="taxonomic scope" value="Eukaryota"/>
</dbReference>
<dbReference type="GeneTree" id="ENSGT00940000157610"/>
<dbReference type="HOGENOM" id="CLU_006332_13_7_1"/>
<dbReference type="InParanoid" id="Q08DD1"/>
<dbReference type="OMA" id="YPAYPDE"/>
<dbReference type="OrthoDB" id="103349at2759"/>
<dbReference type="TreeFam" id="TF314186"/>
<dbReference type="Reactome" id="R-BTA-1663150">
    <property type="pathway name" value="The activation of arylsulfatases"/>
</dbReference>
<dbReference type="Reactome" id="R-BTA-6798695">
    <property type="pathway name" value="Neutrophil degranulation"/>
</dbReference>
<dbReference type="Reactome" id="R-BTA-9840310">
    <property type="pathway name" value="Glycosphingolipid catabolism"/>
</dbReference>
<dbReference type="Proteomes" id="UP000009136">
    <property type="component" value="Chromosome 5"/>
</dbReference>
<dbReference type="Bgee" id="ENSBTAG00000016053">
    <property type="expression patterns" value="Expressed in pigment epithelium of eye and 104 other cell types or tissues"/>
</dbReference>
<dbReference type="GO" id="GO:0005783">
    <property type="term" value="C:endoplasmic reticulum"/>
    <property type="evidence" value="ECO:0007669"/>
    <property type="project" value="UniProtKB-SubCell"/>
</dbReference>
<dbReference type="GO" id="GO:0005764">
    <property type="term" value="C:lysosome"/>
    <property type="evidence" value="ECO:0007669"/>
    <property type="project" value="UniProtKB-SubCell"/>
</dbReference>
<dbReference type="GO" id="GO:0004065">
    <property type="term" value="F:arylsulfatase activity"/>
    <property type="evidence" value="ECO:0000318"/>
    <property type="project" value="GO_Central"/>
</dbReference>
<dbReference type="GO" id="GO:0005509">
    <property type="term" value="F:calcium ion binding"/>
    <property type="evidence" value="ECO:0000250"/>
    <property type="project" value="UniProtKB"/>
</dbReference>
<dbReference type="GO" id="GO:0004098">
    <property type="term" value="F:cerebroside-sulfatase activity"/>
    <property type="evidence" value="ECO:0007669"/>
    <property type="project" value="UniProtKB-EC"/>
</dbReference>
<dbReference type="GO" id="GO:0006629">
    <property type="term" value="P:lipid metabolic process"/>
    <property type="evidence" value="ECO:0007669"/>
    <property type="project" value="UniProtKB-KW"/>
</dbReference>
<dbReference type="FunFam" id="3.30.1120.10:FF:000003">
    <property type="entry name" value="Arylsulfatase A"/>
    <property type="match status" value="1"/>
</dbReference>
<dbReference type="FunFam" id="3.40.720.10:FF:000023">
    <property type="entry name" value="Arylsulfatase A"/>
    <property type="match status" value="1"/>
</dbReference>
<dbReference type="Gene3D" id="3.30.1120.10">
    <property type="match status" value="1"/>
</dbReference>
<dbReference type="Gene3D" id="3.40.720.10">
    <property type="entry name" value="Alkaline Phosphatase, subunit A"/>
    <property type="match status" value="1"/>
</dbReference>
<dbReference type="InterPro" id="IPR017850">
    <property type="entry name" value="Alkaline_phosphatase_core_sf"/>
</dbReference>
<dbReference type="InterPro" id="IPR050738">
    <property type="entry name" value="Sulfatase"/>
</dbReference>
<dbReference type="InterPro" id="IPR024607">
    <property type="entry name" value="Sulfatase_CS"/>
</dbReference>
<dbReference type="InterPro" id="IPR000917">
    <property type="entry name" value="Sulfatase_N"/>
</dbReference>
<dbReference type="PANTHER" id="PTHR42693:SF11">
    <property type="entry name" value="ARYLSULFATASE A"/>
    <property type="match status" value="1"/>
</dbReference>
<dbReference type="PANTHER" id="PTHR42693">
    <property type="entry name" value="ARYLSULFATASE FAMILY MEMBER"/>
    <property type="match status" value="1"/>
</dbReference>
<dbReference type="Pfam" id="PF00884">
    <property type="entry name" value="Sulfatase"/>
    <property type="match status" value="1"/>
</dbReference>
<dbReference type="Pfam" id="PF14707">
    <property type="entry name" value="Sulfatase_C"/>
    <property type="match status" value="1"/>
</dbReference>
<dbReference type="SUPFAM" id="SSF53649">
    <property type="entry name" value="Alkaline phosphatase-like"/>
    <property type="match status" value="1"/>
</dbReference>
<dbReference type="PROSITE" id="PS00523">
    <property type="entry name" value="SULFATASE_1"/>
    <property type="match status" value="1"/>
</dbReference>
<dbReference type="PROSITE" id="PS00149">
    <property type="entry name" value="SULFATASE_2"/>
    <property type="match status" value="1"/>
</dbReference>
<evidence type="ECO:0000250" key="1">
    <source>
        <dbReference type="UniProtKB" id="P15289"/>
    </source>
</evidence>
<evidence type="ECO:0000255" key="2"/>
<evidence type="ECO:0000305" key="3"/>
<accession>Q08DD1</accession>
<gene>
    <name type="primary">ARSA</name>
</gene>
<feature type="signal peptide" evidence="1">
    <location>
        <begin position="1"/>
        <end position="18"/>
    </location>
</feature>
<feature type="chain" id="PRO_0000273636" description="Arylsulfatase A">
    <location>
        <begin position="19"/>
        <end position="507"/>
    </location>
</feature>
<feature type="active site" description="Nucleophile" evidence="1">
    <location>
        <position position="69"/>
    </location>
</feature>
<feature type="active site" evidence="1">
    <location>
        <position position="125"/>
    </location>
</feature>
<feature type="binding site" evidence="1">
    <location>
        <position position="29"/>
    </location>
    <ligand>
        <name>Ca(2+)</name>
        <dbReference type="ChEBI" id="CHEBI:29108"/>
    </ligand>
</feature>
<feature type="binding site" evidence="1">
    <location>
        <position position="30"/>
    </location>
    <ligand>
        <name>Ca(2+)</name>
        <dbReference type="ChEBI" id="CHEBI:29108"/>
    </ligand>
</feature>
<feature type="binding site" description="via 3-oxoalanine" evidence="1">
    <location>
        <position position="69"/>
    </location>
    <ligand>
        <name>Ca(2+)</name>
        <dbReference type="ChEBI" id="CHEBI:29108"/>
    </ligand>
</feature>
<feature type="binding site" evidence="1">
    <location>
        <position position="123"/>
    </location>
    <ligand>
        <name>substrate</name>
    </ligand>
</feature>
<feature type="binding site" evidence="1">
    <location>
        <position position="150"/>
    </location>
    <ligand>
        <name>substrate</name>
    </ligand>
</feature>
<feature type="binding site" evidence="1">
    <location>
        <position position="229"/>
    </location>
    <ligand>
        <name>substrate</name>
    </ligand>
</feature>
<feature type="binding site" evidence="1">
    <location>
        <position position="281"/>
    </location>
    <ligand>
        <name>Ca(2+)</name>
        <dbReference type="ChEBI" id="CHEBI:29108"/>
    </ligand>
</feature>
<feature type="binding site" evidence="1">
    <location>
        <position position="282"/>
    </location>
    <ligand>
        <name>Ca(2+)</name>
        <dbReference type="ChEBI" id="CHEBI:29108"/>
    </ligand>
</feature>
<feature type="binding site" evidence="1">
    <location>
        <position position="302"/>
    </location>
    <ligand>
        <name>substrate</name>
    </ligand>
</feature>
<feature type="modified residue" description="3-oxoalanine (Cys)" evidence="1">
    <location>
        <position position="69"/>
    </location>
</feature>
<feature type="glycosylation site" description="N-linked (GlcNAc...) asparagine" evidence="2">
    <location>
        <position position="158"/>
    </location>
</feature>
<feature type="glycosylation site" description="N-linked (GlcNAc...) asparagine" evidence="2">
    <location>
        <position position="184"/>
    </location>
</feature>
<feature type="glycosylation site" description="N-linked (GlcNAc...) asparagine" evidence="2">
    <location>
        <position position="350"/>
    </location>
</feature>
<feature type="disulfide bond" evidence="1">
    <location>
        <begin position="156"/>
        <end position="172"/>
    </location>
</feature>
<feature type="disulfide bond" evidence="1">
    <location>
        <begin position="161"/>
        <end position="168"/>
    </location>
</feature>
<feature type="disulfide bond" evidence="1">
    <location>
        <begin position="300"/>
        <end position="414"/>
    </location>
</feature>
<feature type="disulfide bond" evidence="1">
    <location>
        <begin position="488"/>
        <end position="500"/>
    </location>
</feature>
<feature type="disulfide bond" evidence="1">
    <location>
        <begin position="489"/>
        <end position="502"/>
    </location>
</feature>
<feature type="disulfide bond" evidence="1">
    <location>
        <begin position="493"/>
        <end position="499"/>
    </location>
</feature>
<protein>
    <recommendedName>
        <fullName>Arylsulfatase A</fullName>
        <shortName>ASA</shortName>
        <ecNumber evidence="1">3.1.6.8</ecNumber>
    </recommendedName>
    <alternativeName>
        <fullName>Cerebroside-sulfatase</fullName>
    </alternativeName>
</protein>
<comment type="function">
    <text evidence="1">Hydrolyzes cerebroside sulfate.</text>
</comment>
<comment type="catalytic activity">
    <reaction evidence="1">
        <text>an N-acyl-1-beta-D-(3-O-sulfo)-galactosyl-sphing-4-enine + H2O = a beta-D-galactosyl-(1&lt;-&gt;1')-N-acylsphing-4-enine + sulfate + H(+)</text>
        <dbReference type="Rhea" id="RHEA:21300"/>
        <dbReference type="ChEBI" id="CHEBI:15377"/>
        <dbReference type="ChEBI" id="CHEBI:15378"/>
        <dbReference type="ChEBI" id="CHEBI:16189"/>
        <dbReference type="ChEBI" id="CHEBI:18390"/>
        <dbReference type="ChEBI" id="CHEBI:75956"/>
        <dbReference type="EC" id="3.1.6.8"/>
    </reaction>
    <physiologicalReaction direction="left-to-right" evidence="1">
        <dbReference type="Rhea" id="RHEA:21301"/>
    </physiologicalReaction>
</comment>
<comment type="cofactor">
    <cofactor evidence="1">
        <name>Ca(2+)</name>
        <dbReference type="ChEBI" id="CHEBI:29108"/>
    </cofactor>
    <text evidence="1">Binds 1 Ca(2+) ion per subunit.</text>
</comment>
<comment type="subunit">
    <text evidence="1">Homodimer at neutral pH and homooctamer at acidic pH. Exists both as a single chain of 58 kDa (component A) or as a chain of 50 kDa (component B) linked by disulfide bond(s) to a 7 kDa chain (component C). Interacts with SUMF1 (By similarity).</text>
</comment>
<comment type="subcellular location">
    <subcellularLocation>
        <location evidence="1">Endoplasmic reticulum</location>
    </subcellularLocation>
    <subcellularLocation>
        <location evidence="1">Lysosome</location>
    </subcellularLocation>
</comment>
<comment type="PTM">
    <text evidence="1">The conversion to 3-oxoalanine (also known as C-formylglycine, FGly), of a serine or cysteine residue in prokaryotes and of a cysteine residue in eukaryotes, is critical for catalytic activity. This post-translational modification is severely defective in multiple sulfatase deficiency (MSD).</text>
</comment>
<comment type="similarity">
    <text evidence="3">Belongs to the sulfatase family.</text>
</comment>